<evidence type="ECO:0000255" key="1">
    <source>
        <dbReference type="HAMAP-Rule" id="MF_00176"/>
    </source>
</evidence>
<evidence type="ECO:0000256" key="2">
    <source>
        <dbReference type="SAM" id="MobiDB-lite"/>
    </source>
</evidence>
<keyword id="KW-0030">Aminoacyl-tRNA synthetase</keyword>
<keyword id="KW-0067">ATP-binding</keyword>
<keyword id="KW-0963">Cytoplasm</keyword>
<keyword id="KW-0436">Ligase</keyword>
<keyword id="KW-0547">Nucleotide-binding</keyword>
<keyword id="KW-0648">Protein biosynthesis</keyword>
<dbReference type="EC" id="6.1.1.11" evidence="1"/>
<dbReference type="EMBL" id="AE017283">
    <property type="protein sequence ID" value="AAT83923.1"/>
    <property type="molecule type" value="Genomic_DNA"/>
</dbReference>
<dbReference type="RefSeq" id="WP_002516187.1">
    <property type="nucleotide sequence ID" value="NZ_CP025935.1"/>
</dbReference>
<dbReference type="SMR" id="Q6A5P0"/>
<dbReference type="EnsemblBacteria" id="AAT83923">
    <property type="protein sequence ID" value="AAT83923"/>
    <property type="gene ID" value="PPA2219"/>
</dbReference>
<dbReference type="GeneID" id="92858155"/>
<dbReference type="KEGG" id="pac:PPA2219"/>
<dbReference type="eggNOG" id="COG0172">
    <property type="taxonomic scope" value="Bacteria"/>
</dbReference>
<dbReference type="HOGENOM" id="CLU_023797_0_1_11"/>
<dbReference type="UniPathway" id="UPA00906">
    <property type="reaction ID" value="UER00895"/>
</dbReference>
<dbReference type="Proteomes" id="UP000000603">
    <property type="component" value="Chromosome"/>
</dbReference>
<dbReference type="GO" id="GO:0005737">
    <property type="term" value="C:cytoplasm"/>
    <property type="evidence" value="ECO:0007669"/>
    <property type="project" value="UniProtKB-SubCell"/>
</dbReference>
<dbReference type="GO" id="GO:0005524">
    <property type="term" value="F:ATP binding"/>
    <property type="evidence" value="ECO:0007669"/>
    <property type="project" value="UniProtKB-UniRule"/>
</dbReference>
<dbReference type="GO" id="GO:0004828">
    <property type="term" value="F:serine-tRNA ligase activity"/>
    <property type="evidence" value="ECO:0007669"/>
    <property type="project" value="UniProtKB-UniRule"/>
</dbReference>
<dbReference type="GO" id="GO:0016260">
    <property type="term" value="P:selenocysteine biosynthetic process"/>
    <property type="evidence" value="ECO:0007669"/>
    <property type="project" value="UniProtKB-UniRule"/>
</dbReference>
<dbReference type="GO" id="GO:0006434">
    <property type="term" value="P:seryl-tRNA aminoacylation"/>
    <property type="evidence" value="ECO:0007669"/>
    <property type="project" value="UniProtKB-UniRule"/>
</dbReference>
<dbReference type="CDD" id="cd00770">
    <property type="entry name" value="SerRS_core"/>
    <property type="match status" value="1"/>
</dbReference>
<dbReference type="Gene3D" id="3.30.930.10">
    <property type="entry name" value="Bira Bifunctional Protein, Domain 2"/>
    <property type="match status" value="1"/>
</dbReference>
<dbReference type="Gene3D" id="1.10.287.40">
    <property type="entry name" value="Serine-tRNA synthetase, tRNA binding domain"/>
    <property type="match status" value="1"/>
</dbReference>
<dbReference type="HAMAP" id="MF_00176">
    <property type="entry name" value="Ser_tRNA_synth_type1"/>
    <property type="match status" value="1"/>
</dbReference>
<dbReference type="InterPro" id="IPR002314">
    <property type="entry name" value="aa-tRNA-synt_IIb"/>
</dbReference>
<dbReference type="InterPro" id="IPR006195">
    <property type="entry name" value="aa-tRNA-synth_II"/>
</dbReference>
<dbReference type="InterPro" id="IPR045864">
    <property type="entry name" value="aa-tRNA-synth_II/BPL/LPL"/>
</dbReference>
<dbReference type="InterPro" id="IPR002317">
    <property type="entry name" value="Ser-tRNA-ligase_type_1"/>
</dbReference>
<dbReference type="InterPro" id="IPR015866">
    <property type="entry name" value="Ser-tRNA-synth_1_N"/>
</dbReference>
<dbReference type="InterPro" id="IPR042103">
    <property type="entry name" value="SerRS_1_N_sf"/>
</dbReference>
<dbReference type="InterPro" id="IPR033729">
    <property type="entry name" value="SerRS_core"/>
</dbReference>
<dbReference type="InterPro" id="IPR010978">
    <property type="entry name" value="tRNA-bd_arm"/>
</dbReference>
<dbReference type="NCBIfam" id="TIGR00414">
    <property type="entry name" value="serS"/>
    <property type="match status" value="1"/>
</dbReference>
<dbReference type="PANTHER" id="PTHR11778">
    <property type="entry name" value="SERYL-TRNA SYNTHETASE"/>
    <property type="match status" value="1"/>
</dbReference>
<dbReference type="Pfam" id="PF02403">
    <property type="entry name" value="Seryl_tRNA_N"/>
    <property type="match status" value="1"/>
</dbReference>
<dbReference type="Pfam" id="PF00587">
    <property type="entry name" value="tRNA-synt_2b"/>
    <property type="match status" value="1"/>
</dbReference>
<dbReference type="PIRSF" id="PIRSF001529">
    <property type="entry name" value="Ser-tRNA-synth_IIa"/>
    <property type="match status" value="1"/>
</dbReference>
<dbReference type="PRINTS" id="PR00981">
    <property type="entry name" value="TRNASYNTHSER"/>
</dbReference>
<dbReference type="SUPFAM" id="SSF55681">
    <property type="entry name" value="Class II aaRS and biotin synthetases"/>
    <property type="match status" value="1"/>
</dbReference>
<dbReference type="SUPFAM" id="SSF46589">
    <property type="entry name" value="tRNA-binding arm"/>
    <property type="match status" value="1"/>
</dbReference>
<dbReference type="PROSITE" id="PS50862">
    <property type="entry name" value="AA_TRNA_LIGASE_II"/>
    <property type="match status" value="1"/>
</dbReference>
<proteinExistence type="inferred from homology"/>
<feature type="chain" id="PRO_1000019763" description="Serine--tRNA ligase">
    <location>
        <begin position="1"/>
        <end position="424"/>
    </location>
</feature>
<feature type="region of interest" description="Disordered" evidence="2">
    <location>
        <begin position="1"/>
        <end position="27"/>
    </location>
</feature>
<feature type="compositionally biased region" description="Basic and acidic residues" evidence="2">
    <location>
        <begin position="1"/>
        <end position="15"/>
    </location>
</feature>
<feature type="binding site" evidence="1">
    <location>
        <begin position="230"/>
        <end position="232"/>
    </location>
    <ligand>
        <name>L-serine</name>
        <dbReference type="ChEBI" id="CHEBI:33384"/>
    </ligand>
</feature>
<feature type="binding site" evidence="1">
    <location>
        <begin position="261"/>
        <end position="263"/>
    </location>
    <ligand>
        <name>ATP</name>
        <dbReference type="ChEBI" id="CHEBI:30616"/>
    </ligand>
</feature>
<feature type="binding site" evidence="1">
    <location>
        <position position="277"/>
    </location>
    <ligand>
        <name>ATP</name>
        <dbReference type="ChEBI" id="CHEBI:30616"/>
    </ligand>
</feature>
<feature type="binding site" evidence="1">
    <location>
        <position position="284"/>
    </location>
    <ligand>
        <name>L-serine</name>
        <dbReference type="ChEBI" id="CHEBI:33384"/>
    </ligand>
</feature>
<feature type="binding site" evidence="1">
    <location>
        <begin position="348"/>
        <end position="351"/>
    </location>
    <ligand>
        <name>ATP</name>
        <dbReference type="ChEBI" id="CHEBI:30616"/>
    </ligand>
</feature>
<feature type="binding site" evidence="1">
    <location>
        <position position="382"/>
    </location>
    <ligand>
        <name>L-serine</name>
        <dbReference type="ChEBI" id="CHEBI:33384"/>
    </ligand>
</feature>
<comment type="function">
    <text evidence="1">Catalyzes the attachment of serine to tRNA(Ser). Is also able to aminoacylate tRNA(Sec) with serine, to form the misacylated tRNA L-seryl-tRNA(Sec), which will be further converted into selenocysteinyl-tRNA(Sec).</text>
</comment>
<comment type="catalytic activity">
    <reaction evidence="1">
        <text>tRNA(Ser) + L-serine + ATP = L-seryl-tRNA(Ser) + AMP + diphosphate + H(+)</text>
        <dbReference type="Rhea" id="RHEA:12292"/>
        <dbReference type="Rhea" id="RHEA-COMP:9669"/>
        <dbReference type="Rhea" id="RHEA-COMP:9703"/>
        <dbReference type="ChEBI" id="CHEBI:15378"/>
        <dbReference type="ChEBI" id="CHEBI:30616"/>
        <dbReference type="ChEBI" id="CHEBI:33019"/>
        <dbReference type="ChEBI" id="CHEBI:33384"/>
        <dbReference type="ChEBI" id="CHEBI:78442"/>
        <dbReference type="ChEBI" id="CHEBI:78533"/>
        <dbReference type="ChEBI" id="CHEBI:456215"/>
        <dbReference type="EC" id="6.1.1.11"/>
    </reaction>
</comment>
<comment type="catalytic activity">
    <reaction evidence="1">
        <text>tRNA(Sec) + L-serine + ATP = L-seryl-tRNA(Sec) + AMP + diphosphate + H(+)</text>
        <dbReference type="Rhea" id="RHEA:42580"/>
        <dbReference type="Rhea" id="RHEA-COMP:9742"/>
        <dbReference type="Rhea" id="RHEA-COMP:10128"/>
        <dbReference type="ChEBI" id="CHEBI:15378"/>
        <dbReference type="ChEBI" id="CHEBI:30616"/>
        <dbReference type="ChEBI" id="CHEBI:33019"/>
        <dbReference type="ChEBI" id="CHEBI:33384"/>
        <dbReference type="ChEBI" id="CHEBI:78442"/>
        <dbReference type="ChEBI" id="CHEBI:78533"/>
        <dbReference type="ChEBI" id="CHEBI:456215"/>
        <dbReference type="EC" id="6.1.1.11"/>
    </reaction>
</comment>
<comment type="pathway">
    <text evidence="1">Aminoacyl-tRNA biosynthesis; selenocysteinyl-tRNA(Sec) biosynthesis; L-seryl-tRNA(Sec) from L-serine and tRNA(Sec): step 1/1.</text>
</comment>
<comment type="subunit">
    <text evidence="1">Homodimer. The tRNA molecule binds across the dimer.</text>
</comment>
<comment type="subcellular location">
    <subcellularLocation>
        <location evidence="1">Cytoplasm</location>
    </subcellularLocation>
</comment>
<comment type="domain">
    <text evidence="1">Consists of two distinct domains, a catalytic core and a N-terminal extension that is involved in tRNA binding.</text>
</comment>
<comment type="similarity">
    <text evidence="1">Belongs to the class-II aminoacyl-tRNA synthetase family. Type-1 seryl-tRNA synthetase subfamily.</text>
</comment>
<protein>
    <recommendedName>
        <fullName evidence="1">Serine--tRNA ligase</fullName>
        <ecNumber evidence="1">6.1.1.11</ecNumber>
    </recommendedName>
    <alternativeName>
        <fullName evidence="1">Seryl-tRNA synthetase</fullName>
        <shortName evidence="1">SerRS</shortName>
    </alternativeName>
    <alternativeName>
        <fullName evidence="1">Seryl-tRNA(Ser/Sec) synthetase</fullName>
    </alternativeName>
</protein>
<name>SYS_CUTAK</name>
<gene>
    <name evidence="1" type="primary">serS</name>
    <name type="ordered locus">PPA2219</name>
</gene>
<reference key="1">
    <citation type="journal article" date="2004" name="Science">
        <title>The complete genome sequence of Propionibacterium acnes, a commensal of human skin.</title>
        <authorList>
            <person name="Brueggemann H."/>
            <person name="Henne A."/>
            <person name="Hoster F."/>
            <person name="Liesegang H."/>
            <person name="Wiezer A."/>
            <person name="Strittmatter A."/>
            <person name="Hujer S."/>
            <person name="Duerre P."/>
            <person name="Gottschalk G."/>
        </authorList>
    </citation>
    <scope>NUCLEOTIDE SEQUENCE [LARGE SCALE GENOMIC DNA]</scope>
    <source>
        <strain>DSM 16379 / KPA171202</strain>
    </source>
</reference>
<accession>Q6A5P0</accession>
<organism>
    <name type="scientific">Cutibacterium acnes (strain DSM 16379 / KPA171202)</name>
    <name type="common">Propionibacterium acnes</name>
    <dbReference type="NCBI Taxonomy" id="267747"/>
    <lineage>
        <taxon>Bacteria</taxon>
        <taxon>Bacillati</taxon>
        <taxon>Actinomycetota</taxon>
        <taxon>Actinomycetes</taxon>
        <taxon>Propionibacteriales</taxon>
        <taxon>Propionibacteriaceae</taxon>
        <taxon>Cutibacterium</taxon>
    </lineage>
</organism>
<sequence>MIDPKLLRTDPDAVRRSQAARGEDSSVVDDVVAADEARREAIAAHENLRAEQKGLGKRIAKASGDEKAELLSRTKTISGEVADLKKAADEADAKFTELAKTLGNIVIDGVPAGGEDEGVIKETVGTPRDFAAEGFEPKDHLEIGEALGAIDMERGTKISGSRFYVLTGVGAQLEFALLNLAMSKAAQWGFTPMIPPALVKPSAMEGTGFLGQAADDVYYLPKDDQYLVGTSEVALAAFHSDEILDDAELPKRYVAFSPCYRREAGSYGKDTRGIFRVHWFDKVEMFVYCLPQEAEAWHEKLLSFEKDFITALQIPFQVLDVASGDLGLSAARKFDCYGWLPTQNRYREITSTSNCTTFQARRLSIRHRGPDGVEPLATLNGTLCAMTRIIIMLLENHQQADGSVRIPEALRPYLGGREFIEPVK</sequence>